<name>ZN766_HUMAN</name>
<keyword id="KW-0238">DNA-binding</keyword>
<keyword id="KW-1017">Isopeptide bond</keyword>
<keyword id="KW-0479">Metal-binding</keyword>
<keyword id="KW-0539">Nucleus</keyword>
<keyword id="KW-1267">Proteomics identification</keyword>
<keyword id="KW-1185">Reference proteome</keyword>
<keyword id="KW-0677">Repeat</keyword>
<keyword id="KW-0804">Transcription</keyword>
<keyword id="KW-0805">Transcription regulation</keyword>
<keyword id="KW-0832">Ubl conjugation</keyword>
<keyword id="KW-0862">Zinc</keyword>
<keyword id="KW-0863">Zinc-finger</keyword>
<comment type="function">
    <text>May be involved in transcriptional regulation.</text>
</comment>
<comment type="interaction">
    <interactant intactId="EBI-2686489">
        <id>Q5HY98</id>
    </interactant>
    <interactant intactId="EBI-750641">
        <id>Q5TD97</id>
        <label>FHL5</label>
    </interactant>
    <organismsDiffer>false</organismsDiffer>
    <experiments>3</experiments>
</comment>
<comment type="subcellular location">
    <subcellularLocation>
        <location evidence="3">Nucleus</location>
    </subcellularLocation>
</comment>
<comment type="similarity">
    <text evidence="3">Belongs to the krueppel C2H2-type zinc-finger protein family.</text>
</comment>
<comment type="sequence caution" evidence="3">
    <conflict type="erroneous initiation">
        <sequence resource="EMBL-CDS" id="CAD98055"/>
    </conflict>
</comment>
<accession>Q5HY98</accession>
<accession>B2RNE0</accession>
<accession>Q7Z326</accession>
<protein>
    <recommendedName>
        <fullName>Zinc finger protein 766</fullName>
    </recommendedName>
</protein>
<sequence length="468" mass="54507">MAQLRRGHLTFRDVAIEFSQEEWKCLDPVQKALYRDVMLENYRNLVSLGICLPDLSIISMMKQRTEPWTVENEMKVAKNPDRWEGIKDINTGRSCAVRSKAGNKPITNQLGLTFQLPLPELEIFQGEGKIYECNQVQKFISHSSSVSPLQRIYSGVKTHIFNKHRNDFVDFPLLSQEQKAHIRRKPYECNEQGKVFRVSSSLPNHQVIHTADKPNRCHECGKTVRDKSGLAEHWRIRTGEKPYKCKECGKLFNRIAYLARHEKVHTGESPYKCNECGKVFSRITYLVRHQKIHTREKPHKCNKCGKVYSSSSYLAQHWRIHTGEKLYKCNKCGKEFSGHSSLTTHLLIHTGEKPYKCKECDKAFRHKFSLTVHQRNHNGEKPYKCHECGKVFTQVSHLARHQKIHTGEKPYKCNECGKVFTQNSHLANHQRIHTGEKPYKCHVCGKVFRHSSWFVQHQRSVHERVLTN</sequence>
<feature type="chain" id="PRO_0000280435" description="Zinc finger protein 766">
    <location>
        <begin position="1"/>
        <end position="468"/>
    </location>
</feature>
<feature type="domain" description="KRAB" evidence="2">
    <location>
        <begin position="9"/>
        <end position="80"/>
    </location>
</feature>
<feature type="zinc finger region" description="C2H2-type 1; degenerate" evidence="1">
    <location>
        <begin position="187"/>
        <end position="209"/>
    </location>
</feature>
<feature type="zinc finger region" description="C2H2-type 2; degenerate" evidence="1">
    <location>
        <begin position="215"/>
        <end position="237"/>
    </location>
</feature>
<feature type="zinc finger region" description="C2H2-type 3" evidence="1">
    <location>
        <begin position="243"/>
        <end position="265"/>
    </location>
</feature>
<feature type="zinc finger region" description="C2H2-type 4" evidence="1">
    <location>
        <begin position="271"/>
        <end position="293"/>
    </location>
</feature>
<feature type="zinc finger region" description="C2H2-type 5" evidence="1">
    <location>
        <begin position="299"/>
        <end position="321"/>
    </location>
</feature>
<feature type="zinc finger region" description="C2H2-type 6" evidence="1">
    <location>
        <begin position="327"/>
        <end position="349"/>
    </location>
</feature>
<feature type="zinc finger region" description="C2H2-type 7" evidence="1">
    <location>
        <begin position="355"/>
        <end position="377"/>
    </location>
</feature>
<feature type="zinc finger region" description="C2H2-type 8" evidence="1">
    <location>
        <begin position="383"/>
        <end position="405"/>
    </location>
</feature>
<feature type="zinc finger region" description="C2H2-type 9" evidence="1">
    <location>
        <begin position="411"/>
        <end position="433"/>
    </location>
</feature>
<feature type="zinc finger region" description="C2H2-type 10" evidence="1">
    <location>
        <begin position="439"/>
        <end position="462"/>
    </location>
</feature>
<feature type="cross-link" description="Glycyl lysine isopeptide (Lys-Gly) (interchain with G-Cter in SUMO2)" evidence="4">
    <location>
        <position position="75"/>
    </location>
</feature>
<feature type="cross-link" description="Glycyl lysine isopeptide (Lys-Gly) (interchain with G-Cter in SUMO2)" evidence="4">
    <location>
        <position position="157"/>
    </location>
</feature>
<feature type="cross-link" description="Glycyl lysine isopeptide (Lys-Gly) (interchain with G-Cter in SUMO2)" evidence="4">
    <location>
        <position position="179"/>
    </location>
</feature>
<feature type="cross-link" description="Glycyl lysine isopeptide (Lys-Gly) (interchain with G-Cter in SUMO2)" evidence="4">
    <location>
        <position position="367"/>
    </location>
</feature>
<feature type="sequence variant" id="VAR_052899" description="In dbSNP:rs12462608.">
    <original>C</original>
    <variation>Y</variation>
    <location>
        <position position="95"/>
    </location>
</feature>
<feature type="sequence conflict" description="In Ref. 1; CAD98055." evidence="3" ref="1">
    <original>L</original>
    <variation>S</variation>
    <location>
        <position position="9"/>
    </location>
</feature>
<proteinExistence type="evidence at protein level"/>
<reference key="1">
    <citation type="journal article" date="2007" name="BMC Genomics">
        <title>The full-ORF clone resource of the German cDNA consortium.</title>
        <authorList>
            <person name="Bechtel S."/>
            <person name="Rosenfelder H."/>
            <person name="Duda A."/>
            <person name="Schmidt C.P."/>
            <person name="Ernst U."/>
            <person name="Wellenreuther R."/>
            <person name="Mehrle A."/>
            <person name="Schuster C."/>
            <person name="Bahr A."/>
            <person name="Bloecker H."/>
            <person name="Heubner D."/>
            <person name="Hoerlein A."/>
            <person name="Michel G."/>
            <person name="Wedler H."/>
            <person name="Koehrer K."/>
            <person name="Ottenwaelder B."/>
            <person name="Poustka A."/>
            <person name="Wiemann S."/>
            <person name="Schupp I."/>
        </authorList>
    </citation>
    <scope>NUCLEOTIDE SEQUENCE [LARGE SCALE MRNA]</scope>
    <source>
        <tissue>Esophageal carcinoma</tissue>
        <tissue>Salivary gland</tissue>
    </source>
</reference>
<reference key="2">
    <citation type="submission" date="2005-07" db="EMBL/GenBank/DDBJ databases">
        <authorList>
            <person name="Mural R.J."/>
            <person name="Istrail S."/>
            <person name="Sutton G.G."/>
            <person name="Florea L."/>
            <person name="Halpern A.L."/>
            <person name="Mobarry C.M."/>
            <person name="Lippert R."/>
            <person name="Walenz B."/>
            <person name="Shatkay H."/>
            <person name="Dew I."/>
            <person name="Miller J.R."/>
            <person name="Flanigan M.J."/>
            <person name="Edwards N.J."/>
            <person name="Bolanos R."/>
            <person name="Fasulo D."/>
            <person name="Halldorsson B.V."/>
            <person name="Hannenhalli S."/>
            <person name="Turner R."/>
            <person name="Yooseph S."/>
            <person name="Lu F."/>
            <person name="Nusskern D.R."/>
            <person name="Shue B.C."/>
            <person name="Zheng X.H."/>
            <person name="Zhong F."/>
            <person name="Delcher A.L."/>
            <person name="Huson D.H."/>
            <person name="Kravitz S.A."/>
            <person name="Mouchard L."/>
            <person name="Reinert K."/>
            <person name="Remington K.A."/>
            <person name="Clark A.G."/>
            <person name="Waterman M.S."/>
            <person name="Eichler E.E."/>
            <person name="Adams M.D."/>
            <person name="Hunkapiller M.W."/>
            <person name="Myers E.W."/>
            <person name="Venter J.C."/>
        </authorList>
    </citation>
    <scope>NUCLEOTIDE SEQUENCE [LARGE SCALE GENOMIC DNA]</scope>
</reference>
<reference key="3">
    <citation type="journal article" date="2004" name="Genome Res.">
        <title>The status, quality, and expansion of the NIH full-length cDNA project: the Mammalian Gene Collection (MGC).</title>
        <authorList>
            <consortium name="The MGC Project Team"/>
        </authorList>
    </citation>
    <scope>NUCLEOTIDE SEQUENCE [LARGE SCALE MRNA]</scope>
    <source>
        <tissue>Brain</tissue>
    </source>
</reference>
<reference key="4">
    <citation type="journal article" date="2017" name="Nat. Struct. Mol. Biol.">
        <title>Site-specific mapping of the human SUMO proteome reveals co-modification with phosphorylation.</title>
        <authorList>
            <person name="Hendriks I.A."/>
            <person name="Lyon D."/>
            <person name="Young C."/>
            <person name="Jensen L.J."/>
            <person name="Vertegaal A.C."/>
            <person name="Nielsen M.L."/>
        </authorList>
    </citation>
    <scope>SUMOYLATION [LARGE SCALE ANALYSIS] AT LYS-75; LYS-157; LYS-179 AND LYS-367</scope>
    <scope>IDENTIFICATION BY MASS SPECTROMETRY [LARGE SCALE ANALYSIS]</scope>
</reference>
<evidence type="ECO:0000255" key="1">
    <source>
        <dbReference type="PROSITE-ProRule" id="PRU00042"/>
    </source>
</evidence>
<evidence type="ECO:0000255" key="2">
    <source>
        <dbReference type="PROSITE-ProRule" id="PRU00119"/>
    </source>
</evidence>
<evidence type="ECO:0000305" key="3"/>
<evidence type="ECO:0007744" key="4">
    <source>
    </source>
</evidence>
<gene>
    <name type="primary">ZNF766</name>
</gene>
<organism>
    <name type="scientific">Homo sapiens</name>
    <name type="common">Human</name>
    <dbReference type="NCBI Taxonomy" id="9606"/>
    <lineage>
        <taxon>Eukaryota</taxon>
        <taxon>Metazoa</taxon>
        <taxon>Chordata</taxon>
        <taxon>Craniata</taxon>
        <taxon>Vertebrata</taxon>
        <taxon>Euteleostomi</taxon>
        <taxon>Mammalia</taxon>
        <taxon>Eutheria</taxon>
        <taxon>Euarchontoglires</taxon>
        <taxon>Primates</taxon>
        <taxon>Haplorrhini</taxon>
        <taxon>Catarrhini</taxon>
        <taxon>Hominidae</taxon>
        <taxon>Homo</taxon>
    </lineage>
</organism>
<dbReference type="EMBL" id="BX538183">
    <property type="protein sequence ID" value="CAD98055.1"/>
    <property type="status" value="ALT_INIT"/>
    <property type="molecule type" value="mRNA"/>
</dbReference>
<dbReference type="EMBL" id="BX648899">
    <property type="protein sequence ID" value="CAI45991.1"/>
    <property type="molecule type" value="mRNA"/>
</dbReference>
<dbReference type="EMBL" id="CH471135">
    <property type="protein sequence ID" value="EAW72068.1"/>
    <property type="molecule type" value="Genomic_DNA"/>
</dbReference>
<dbReference type="EMBL" id="BC136833">
    <property type="protein sequence ID" value="AAI36834.1"/>
    <property type="molecule type" value="mRNA"/>
</dbReference>
<dbReference type="EMBL" id="BC136834">
    <property type="protein sequence ID" value="AAI36835.1"/>
    <property type="molecule type" value="mRNA"/>
</dbReference>
<dbReference type="CCDS" id="CCDS46163.1"/>
<dbReference type="RefSeq" id="NP_001010851.1">
    <property type="nucleotide sequence ID" value="NM_001010851.3"/>
</dbReference>
<dbReference type="SMR" id="Q5HY98"/>
<dbReference type="BioGRID" id="124692">
    <property type="interactions" value="10"/>
</dbReference>
<dbReference type="FunCoup" id="Q5HY98">
    <property type="interactions" value="1360"/>
</dbReference>
<dbReference type="IntAct" id="Q5HY98">
    <property type="interactions" value="7"/>
</dbReference>
<dbReference type="STRING" id="9606.ENSP00000409652"/>
<dbReference type="iPTMnet" id="Q5HY98"/>
<dbReference type="PhosphoSitePlus" id="Q5HY98"/>
<dbReference type="BioMuta" id="ZNF766"/>
<dbReference type="DMDM" id="74755487"/>
<dbReference type="jPOST" id="Q5HY98"/>
<dbReference type="MassIVE" id="Q5HY98"/>
<dbReference type="PaxDb" id="9606-ENSP00000409652"/>
<dbReference type="PeptideAtlas" id="Q5HY98"/>
<dbReference type="ProteomicsDB" id="62926"/>
<dbReference type="Antibodypedia" id="32582">
    <property type="antibodies" value="60 antibodies from 15 providers"/>
</dbReference>
<dbReference type="DNASU" id="90321"/>
<dbReference type="Ensembl" id="ENST00000439461.6">
    <property type="protein sequence ID" value="ENSP00000409652.1"/>
    <property type="gene ID" value="ENSG00000196214.11"/>
</dbReference>
<dbReference type="GeneID" id="90321"/>
<dbReference type="KEGG" id="hsa:90321"/>
<dbReference type="MANE-Select" id="ENST00000439461.6">
    <property type="protein sequence ID" value="ENSP00000409652.1"/>
    <property type="RefSeq nucleotide sequence ID" value="NM_001010851.3"/>
    <property type="RefSeq protein sequence ID" value="NP_001010851.1"/>
</dbReference>
<dbReference type="UCSC" id="uc002pyr.2">
    <property type="organism name" value="human"/>
</dbReference>
<dbReference type="AGR" id="HGNC:28063"/>
<dbReference type="CTD" id="90321"/>
<dbReference type="GeneCards" id="ZNF766"/>
<dbReference type="HGNC" id="HGNC:28063">
    <property type="gene designation" value="ZNF766"/>
</dbReference>
<dbReference type="HPA" id="ENSG00000196214">
    <property type="expression patterns" value="Low tissue specificity"/>
</dbReference>
<dbReference type="neXtProt" id="NX_Q5HY98"/>
<dbReference type="OpenTargets" id="ENSG00000196214"/>
<dbReference type="PharmGKB" id="PA162410313"/>
<dbReference type="VEuPathDB" id="HostDB:ENSG00000196214"/>
<dbReference type="eggNOG" id="KOG1721">
    <property type="taxonomic scope" value="Eukaryota"/>
</dbReference>
<dbReference type="GeneTree" id="ENSGT00940000165090"/>
<dbReference type="HOGENOM" id="CLU_002678_0_9_1"/>
<dbReference type="InParanoid" id="Q5HY98"/>
<dbReference type="OMA" id="ACKYNEC"/>
<dbReference type="OrthoDB" id="9411774at2759"/>
<dbReference type="PAN-GO" id="Q5HY98">
    <property type="GO annotations" value="0 GO annotations based on evolutionary models"/>
</dbReference>
<dbReference type="PhylomeDB" id="Q5HY98"/>
<dbReference type="TreeFam" id="TF341892"/>
<dbReference type="PathwayCommons" id="Q5HY98"/>
<dbReference type="SignaLink" id="Q5HY98"/>
<dbReference type="BioGRID-ORCS" id="90321">
    <property type="hits" value="15 hits in 1174 CRISPR screens"/>
</dbReference>
<dbReference type="ChiTaRS" id="ZNF766">
    <property type="organism name" value="human"/>
</dbReference>
<dbReference type="GenomeRNAi" id="90321"/>
<dbReference type="Pharos" id="Q5HY98">
    <property type="development level" value="Tdark"/>
</dbReference>
<dbReference type="PRO" id="PR:Q5HY98"/>
<dbReference type="Proteomes" id="UP000005640">
    <property type="component" value="Chromosome 19"/>
</dbReference>
<dbReference type="RNAct" id="Q5HY98">
    <property type="molecule type" value="protein"/>
</dbReference>
<dbReference type="Bgee" id="ENSG00000196214">
    <property type="expression patterns" value="Expressed in sperm and 188 other cell types or tissues"/>
</dbReference>
<dbReference type="ExpressionAtlas" id="Q5HY98">
    <property type="expression patterns" value="baseline and differential"/>
</dbReference>
<dbReference type="GO" id="GO:0005634">
    <property type="term" value="C:nucleus"/>
    <property type="evidence" value="ECO:0007005"/>
    <property type="project" value="UniProtKB"/>
</dbReference>
<dbReference type="GO" id="GO:0000981">
    <property type="term" value="F:DNA-binding transcription factor activity, RNA polymerase II-specific"/>
    <property type="evidence" value="ECO:0000318"/>
    <property type="project" value="GO_Central"/>
</dbReference>
<dbReference type="GO" id="GO:0000978">
    <property type="term" value="F:RNA polymerase II cis-regulatory region sequence-specific DNA binding"/>
    <property type="evidence" value="ECO:0000318"/>
    <property type="project" value="GO_Central"/>
</dbReference>
<dbReference type="GO" id="GO:0008270">
    <property type="term" value="F:zinc ion binding"/>
    <property type="evidence" value="ECO:0007669"/>
    <property type="project" value="UniProtKB-KW"/>
</dbReference>
<dbReference type="GO" id="GO:0006357">
    <property type="term" value="P:regulation of transcription by RNA polymerase II"/>
    <property type="evidence" value="ECO:0000318"/>
    <property type="project" value="GO_Central"/>
</dbReference>
<dbReference type="CDD" id="cd07765">
    <property type="entry name" value="KRAB_A-box"/>
    <property type="match status" value="1"/>
</dbReference>
<dbReference type="FunFam" id="3.30.160.60:FF:004137">
    <property type="match status" value="1"/>
</dbReference>
<dbReference type="FunFam" id="3.30.160.60:FF:002343">
    <property type="entry name" value="Zinc finger protein 33A"/>
    <property type="match status" value="2"/>
</dbReference>
<dbReference type="FunFam" id="3.30.160.60:FF:002402">
    <property type="entry name" value="Zinc finger protein 347"/>
    <property type="match status" value="1"/>
</dbReference>
<dbReference type="FunFam" id="3.30.160.60:FF:001882">
    <property type="entry name" value="Zinc finger protein 473"/>
    <property type="match status" value="1"/>
</dbReference>
<dbReference type="FunFam" id="3.30.160.60:FF:002090">
    <property type="entry name" value="Zinc finger protein 473"/>
    <property type="match status" value="1"/>
</dbReference>
<dbReference type="FunFam" id="3.30.160.60:FF:001509">
    <property type="entry name" value="Zinc finger protein 616"/>
    <property type="match status" value="1"/>
</dbReference>
<dbReference type="FunFam" id="3.30.160.60:FF:001791">
    <property type="entry name" value="Zinc finger protein 766"/>
    <property type="match status" value="1"/>
</dbReference>
<dbReference type="FunFam" id="3.30.160.60:FF:002103">
    <property type="entry name" value="Zinc finger protein 766"/>
    <property type="match status" value="2"/>
</dbReference>
<dbReference type="Gene3D" id="6.10.140.140">
    <property type="match status" value="1"/>
</dbReference>
<dbReference type="Gene3D" id="3.30.160.60">
    <property type="entry name" value="Classic Zinc Finger"/>
    <property type="match status" value="10"/>
</dbReference>
<dbReference type="InterPro" id="IPR001909">
    <property type="entry name" value="KRAB"/>
</dbReference>
<dbReference type="InterPro" id="IPR036051">
    <property type="entry name" value="KRAB_dom_sf"/>
</dbReference>
<dbReference type="InterPro" id="IPR036236">
    <property type="entry name" value="Znf_C2H2_sf"/>
</dbReference>
<dbReference type="InterPro" id="IPR013087">
    <property type="entry name" value="Znf_C2H2_type"/>
</dbReference>
<dbReference type="PANTHER" id="PTHR24381">
    <property type="entry name" value="ZINC FINGER PROTEIN"/>
    <property type="match status" value="1"/>
</dbReference>
<dbReference type="PANTHER" id="PTHR24381:SF390">
    <property type="entry name" value="ZINC FINGER PROTEIN 37 HOMOLOG"/>
    <property type="match status" value="1"/>
</dbReference>
<dbReference type="Pfam" id="PF01352">
    <property type="entry name" value="KRAB"/>
    <property type="match status" value="1"/>
</dbReference>
<dbReference type="Pfam" id="PF00096">
    <property type="entry name" value="zf-C2H2"/>
    <property type="match status" value="7"/>
</dbReference>
<dbReference type="Pfam" id="PF13465">
    <property type="entry name" value="zf-H2C2_2"/>
    <property type="match status" value="1"/>
</dbReference>
<dbReference type="SMART" id="SM00349">
    <property type="entry name" value="KRAB"/>
    <property type="match status" value="1"/>
</dbReference>
<dbReference type="SMART" id="SM00355">
    <property type="entry name" value="ZnF_C2H2"/>
    <property type="match status" value="10"/>
</dbReference>
<dbReference type="SUPFAM" id="SSF57667">
    <property type="entry name" value="beta-beta-alpha zinc fingers"/>
    <property type="match status" value="6"/>
</dbReference>
<dbReference type="SUPFAM" id="SSF109640">
    <property type="entry name" value="KRAB domain (Kruppel-associated box)"/>
    <property type="match status" value="1"/>
</dbReference>
<dbReference type="PROSITE" id="PS50805">
    <property type="entry name" value="KRAB"/>
    <property type="match status" value="1"/>
</dbReference>
<dbReference type="PROSITE" id="PS00028">
    <property type="entry name" value="ZINC_FINGER_C2H2_1"/>
    <property type="match status" value="8"/>
</dbReference>
<dbReference type="PROSITE" id="PS50157">
    <property type="entry name" value="ZINC_FINGER_C2H2_2"/>
    <property type="match status" value="10"/>
</dbReference>